<protein>
    <recommendedName>
        <fullName evidence="7">Phenol 2-monooxygenase, oxygenase component DmpN</fullName>
        <ecNumber evidence="4">1.14.13.244</ecNumber>
    </recommendedName>
    <alternativeName>
        <fullName>Phenol 2-monooxygenase P3 component</fullName>
    </alternativeName>
    <alternativeName>
        <fullName>Phenol hydroxylase P3 protein</fullName>
    </alternativeName>
</protein>
<keyword id="KW-0058">Aromatic hydrocarbons catabolism</keyword>
<keyword id="KW-0408">Iron</keyword>
<keyword id="KW-0479">Metal-binding</keyword>
<keyword id="KW-0503">Monooxygenase</keyword>
<keyword id="KW-0520">NAD</keyword>
<keyword id="KW-0560">Oxidoreductase</keyword>
<keyword id="KW-0614">Plasmid</keyword>
<comment type="function">
    <text evidence="2 3 4">Part of a multicomponent enzyme which catalyzes the degradation of phenol and some of its methylated derivatives (PubMed:2254259). DmpL, DmpN and DmpO form the oxygenase component of the complex (PubMed:12186554). Required for growth on phenol and for in vitro phenol hydroxylase activity (PubMed:2254258, PubMed:2254259).</text>
</comment>
<comment type="catalytic activity">
    <reaction evidence="4">
        <text>phenol + NADH + O2 + H(+) = catechol + NAD(+) + H2O</text>
        <dbReference type="Rhea" id="RHEA:57952"/>
        <dbReference type="ChEBI" id="CHEBI:15377"/>
        <dbReference type="ChEBI" id="CHEBI:15378"/>
        <dbReference type="ChEBI" id="CHEBI:15379"/>
        <dbReference type="ChEBI" id="CHEBI:15882"/>
        <dbReference type="ChEBI" id="CHEBI:18135"/>
        <dbReference type="ChEBI" id="CHEBI:57540"/>
        <dbReference type="ChEBI" id="CHEBI:57945"/>
        <dbReference type="EC" id="1.14.13.244"/>
    </reaction>
    <physiologicalReaction direction="left-to-right" evidence="4">
        <dbReference type="Rhea" id="RHEA:57953"/>
    </physiologicalReaction>
</comment>
<comment type="cofactor">
    <cofactor evidence="2">
        <name>Fe(2+)</name>
        <dbReference type="ChEBI" id="CHEBI:29033"/>
    </cofactor>
    <text evidence="2">Binds 2 Fe(2+) ions per subunit.</text>
</comment>
<comment type="activity regulation">
    <text evidence="2">Requires DmpM for efficient turnover. The activity of DmpLNO oxygenase is inhibited by dithiothreitol (DTT) by a mechanism apparently involving H(2)O(2) generation.</text>
</comment>
<comment type="pathway">
    <text evidence="3">Aromatic compound metabolism; phenol degradation.</text>
</comment>
<comment type="subunit">
    <text evidence="2 4 5">The multicomponent enzyme phenol hydroxylase is formed by DmpL (P1 component), DmpM (P2 component), DmpN (P3 component), DmpO (P4 component) and DmpP (P5 component) (PubMed:2254259). The oxygenase component is a dimer composed of three subunits, DmpL, DmpN and DmpO (DmpLNO) (PubMed:12186554). DmpN interacts with the auxiliary protein DmpK (P0 component) (PubMed:8995386).</text>
</comment>
<comment type="disruption phenotype">
    <text evidence="3">Cells lacking this gene cannot grow on phenol.</text>
</comment>
<comment type="similarity">
    <text evidence="7">Belongs to the TmoA/XamoA family.</text>
</comment>
<gene>
    <name evidence="6" type="primary">dmpN</name>
    <name type="synonym">pheA4</name>
</gene>
<feature type="chain" id="PRO_0000079945" description="Phenol 2-monooxygenase, oxygenase component DmpN">
    <location>
        <begin position="1"/>
        <end position="517"/>
    </location>
</feature>
<feature type="binding site" evidence="1">
    <location>
        <position position="109"/>
    </location>
    <ligand>
        <name>Fe cation</name>
        <dbReference type="ChEBI" id="CHEBI:24875"/>
        <label>1</label>
        <note>catalytic</note>
    </ligand>
</feature>
<feature type="binding site" evidence="1">
    <location>
        <position position="139"/>
    </location>
    <ligand>
        <name>Fe cation</name>
        <dbReference type="ChEBI" id="CHEBI:24875"/>
        <label>1</label>
        <note>catalytic</note>
    </ligand>
</feature>
<feature type="binding site" evidence="1">
    <location>
        <position position="139"/>
    </location>
    <ligand>
        <name>Fe cation</name>
        <dbReference type="ChEBI" id="CHEBI:24875"/>
        <label>2</label>
        <note>catalytic</note>
    </ligand>
</feature>
<feature type="binding site" evidence="1">
    <location>
        <position position="142"/>
    </location>
    <ligand>
        <name>Fe cation</name>
        <dbReference type="ChEBI" id="CHEBI:24875"/>
        <label>1</label>
        <note>catalytic</note>
    </ligand>
</feature>
<feature type="binding site" evidence="1">
    <location>
        <position position="200"/>
    </location>
    <ligand>
        <name>Fe cation</name>
        <dbReference type="ChEBI" id="CHEBI:24875"/>
        <label>2</label>
        <note>catalytic</note>
    </ligand>
</feature>
<feature type="binding site" evidence="1">
    <location>
        <position position="234"/>
    </location>
    <ligand>
        <name>Fe cation</name>
        <dbReference type="ChEBI" id="CHEBI:24875"/>
        <label>1</label>
        <note>catalytic</note>
    </ligand>
</feature>
<feature type="binding site" evidence="1">
    <location>
        <position position="234"/>
    </location>
    <ligand>
        <name>Fe cation</name>
        <dbReference type="ChEBI" id="CHEBI:24875"/>
        <label>2</label>
        <note>catalytic</note>
    </ligand>
</feature>
<feature type="binding site" evidence="1">
    <location>
        <position position="237"/>
    </location>
    <ligand>
        <name>Fe cation</name>
        <dbReference type="ChEBI" id="CHEBI:24875"/>
        <label>2</label>
        <note>catalytic</note>
    </ligand>
</feature>
<reference key="1">
    <citation type="journal article" date="1990" name="J. Bacteriol.">
        <title>Complete nucleotide sequence and polypeptide analysis of multicomponent phenol hydroxylase from Pseudomonas sp. strain CF600.</title>
        <authorList>
            <person name="Nordlund I."/>
            <person name="Powlowski J."/>
            <person name="Shingler V."/>
        </authorList>
    </citation>
    <scope>NUCLEOTIDE SEQUENCE [GENOMIC DNA]</scope>
    <scope>FUNCTION</scope>
    <scope>PATHWAY</scope>
    <scope>DISRUPTION PHENOTYPE</scope>
    <source>
        <strain>CF600</strain>
    </source>
</reference>
<reference key="2">
    <citation type="submission" date="1994-03" db="EMBL/GenBank/DDBJ databases">
        <authorList>
            <person name="Takeo M."/>
            <person name="Maeda Y."/>
            <person name="Okada H."/>
            <person name="Miyama K."/>
            <person name="Mori K."/>
            <person name="Ike M."/>
            <person name="Fujita M."/>
        </authorList>
    </citation>
    <scope>NUCLEOTIDE SEQUENCE [GENOMIC DNA]</scope>
    <source>
        <strain>BH</strain>
    </source>
</reference>
<reference key="3">
    <citation type="journal article" date="1990" name="J. Bacteriol.">
        <title>In vitro analysis of polypeptide requirements of multicomponent phenol hydroxylase from Pseudomonas sp. strain CF600.</title>
        <authorList>
            <person name="Powlowski J."/>
            <person name="Shingler V."/>
        </authorList>
    </citation>
    <scope>FUNCTION</scope>
    <scope>CATALYTIC ACTIVITY</scope>
    <scope>SUBUNIT</scope>
    <source>
        <strain>CF600</strain>
    </source>
</reference>
<reference key="4">
    <citation type="journal article" date="1997" name="J. Biol. Chem.">
        <title>On the role of DmpK, an auxiliary protein associated with multicomponent phenol hydroxylase from Pseudomonas sp. strain CF600.</title>
        <authorList>
            <person name="Powlowski J."/>
            <person name="Sealy J."/>
            <person name="Shingler V."/>
            <person name="Cadieux E."/>
        </authorList>
    </citation>
    <scope>INTERACTION WITH DMPK</scope>
    <source>
        <strain>CF600</strain>
    </source>
</reference>
<reference key="5">
    <citation type="journal article" date="2002" name="Biochemistry">
        <title>Biochemical, Moessbauer, and EPR studies of the diiron cluster of phenol hydroxylase from Pseudomonas sp. strain CF 600.</title>
        <authorList>
            <person name="Cadieux E."/>
            <person name="Vrajmasu V."/>
            <person name="Achim C."/>
            <person name="Powlowski J."/>
            <person name="Muenck E."/>
        </authorList>
    </citation>
    <scope>FUNCTION</scope>
    <scope>COFACTOR</scope>
    <scope>ACTIVITY REGULATION</scope>
    <scope>SUBUNIT</scope>
    <source>
        <strain>CF600</strain>
    </source>
</reference>
<evidence type="ECO:0000250" key="1">
    <source>
        <dbReference type="UniProtKB" id="Q00456"/>
    </source>
</evidence>
<evidence type="ECO:0000269" key="2">
    <source>
    </source>
</evidence>
<evidence type="ECO:0000269" key="3">
    <source>
    </source>
</evidence>
<evidence type="ECO:0000269" key="4">
    <source>
    </source>
</evidence>
<evidence type="ECO:0000269" key="5">
    <source>
    </source>
</evidence>
<evidence type="ECO:0000303" key="6">
    <source>
    </source>
</evidence>
<evidence type="ECO:0000305" key="7"/>
<organism>
    <name type="scientific">Pseudomonas sp. (strain CF600)</name>
    <dbReference type="NCBI Taxonomy" id="79676"/>
    <lineage>
        <taxon>Bacteria</taxon>
        <taxon>Pseudomonadati</taxon>
        <taxon>Pseudomonadota</taxon>
    </lineage>
</organism>
<name>DMPN_PSEUF</name>
<dbReference type="EC" id="1.14.13.244" evidence="4"/>
<dbReference type="EMBL" id="M60276">
    <property type="protein sequence ID" value="AAA25942.1"/>
    <property type="molecule type" value="Genomic_DNA"/>
</dbReference>
<dbReference type="EMBL" id="D28864">
    <property type="protein sequence ID" value="BAA06017.1"/>
    <property type="molecule type" value="Genomic_DNA"/>
</dbReference>
<dbReference type="SMR" id="P19732"/>
<dbReference type="BioCyc" id="MetaCyc:MONOMER-12797"/>
<dbReference type="BRENDA" id="1.14.13.244">
    <property type="organism ID" value="16277"/>
</dbReference>
<dbReference type="UniPathway" id="UPA00728"/>
<dbReference type="GO" id="GO:0046872">
    <property type="term" value="F:metal ion binding"/>
    <property type="evidence" value="ECO:0007669"/>
    <property type="project" value="UniProtKB-KW"/>
</dbReference>
<dbReference type="GO" id="GO:0018662">
    <property type="term" value="F:phenol 2-monooxygenase activity"/>
    <property type="evidence" value="ECO:0007669"/>
    <property type="project" value="UniProtKB-EC"/>
</dbReference>
<dbReference type="GO" id="GO:0019336">
    <property type="term" value="P:phenol-containing compound catabolic process"/>
    <property type="evidence" value="ECO:0007669"/>
    <property type="project" value="UniProtKB-UniPathway"/>
</dbReference>
<dbReference type="CDD" id="cd01057">
    <property type="entry name" value="AAMH_A"/>
    <property type="match status" value="1"/>
</dbReference>
<dbReference type="Gene3D" id="1.10.620.20">
    <property type="entry name" value="Ribonucleotide Reductase, subunit A"/>
    <property type="match status" value="1"/>
</dbReference>
<dbReference type="InterPro" id="IPR009078">
    <property type="entry name" value="Ferritin-like_SF"/>
</dbReference>
<dbReference type="InterPro" id="IPR003430">
    <property type="entry name" value="Phenol_Hydrox"/>
</dbReference>
<dbReference type="InterPro" id="IPR012348">
    <property type="entry name" value="RNR-like"/>
</dbReference>
<dbReference type="InterPro" id="IPR007029">
    <property type="entry name" value="YHS_dom"/>
</dbReference>
<dbReference type="Pfam" id="PF02332">
    <property type="entry name" value="Phenol_Hydrox"/>
    <property type="match status" value="1"/>
</dbReference>
<dbReference type="Pfam" id="PF04945">
    <property type="entry name" value="YHS"/>
    <property type="match status" value="1"/>
</dbReference>
<dbReference type="SUPFAM" id="SSF47240">
    <property type="entry name" value="Ferritin-like"/>
    <property type="match status" value="1"/>
</dbReference>
<sequence length="517" mass="60523">MATHNKKRLNLKDKYRYLTRDLAWETTYQKKEDVFPLEHFEGIKITDWDKWEDPFRLTMDTYWKYQAEKEKKLYAIFDAFAQNNGHQNISDARYVNALKLFLTAVSPLEYQAFQGFSRVGRQFSGAGARVACQMQAIDELRHVQTQVHAMSHYNKHFDGLHDFAHMYDRVWYLSVPKSYMDDARTAGPFEFLTAVSFSFEYVLTNLLFVPFMSGAAYNGDMATVTFGFSAQSDEARHMTLGLEVIKFMLEQHEDNVPIIQRWIDKWFWRGYRLLTLIGMMMDYMLPNKVMSWSEAWGVYFEQAGGALFKDLERYGIRPPKYVEQTTIGKEHITHQVWGALYQYSKATSFHTWIPGDEELNWLSEKYPDTFDKYYRPRFEFWREQQAKGERFYNDTLPHLCQVCQLPVIFTEPDDPTKLSLRSLVHEGERYQFCSDGCCDIFKNEPVKYIQAWLPVHQIYQGNCEGGDVETVVQKYYHIKSGVDNLEYLGSPEHQRWLALKGQTPPTAAPADKSLGAA</sequence>
<geneLocation type="plasmid">
    <name>pVI150</name>
</geneLocation>
<proteinExistence type="evidence at protein level"/>
<accession>P19732</accession>